<sequence>MRVAVTGTPGTGKTTATGRLDTALDVAHLNDLVGTEGLYDGVDADRGSKIVDVDAVRDHFAGREDVLVESHLAHRLDDLDAVVVLRCAPETLATRLQDRGDSPEKAAENADSEALAIILSEAVRGHGADAVYEIDTTDRSPDAVAAAIQAVLDGDREPSAGTVDYTDYV</sequence>
<gene>
    <name type="ordered locus">OE_2506R</name>
</gene>
<protein>
    <recommendedName>
        <fullName evidence="1">Putative adenylate kinase</fullName>
        <shortName evidence="1">AK</shortName>
        <ecNumber evidence="1">2.7.4.3</ecNumber>
    </recommendedName>
    <alternativeName>
        <fullName evidence="1">ATP-AMP transphosphorylase</fullName>
    </alternativeName>
</protein>
<proteinExistence type="inferred from homology"/>
<comment type="function">
    <text evidence="1">Broad-specificity nucleoside monophosphate (NMP) kinase that catalyzes the reversible transfer of the terminal phosphate group between nucleoside triphosphates and monophosphates. Also has ATPase activity. Involved in the late maturation steps of the 30S ribosomal particles, specifically 16S rRNA maturation. While NMP activity is not required for ribosome maturation, ATPase activity is. Associates transiently with small ribosomal subunit protein uS11. ATP hydrolysis breaks the interaction with uS11. May temporarily remove uS11 from the ribosome to enable a conformational change of the ribosomal RNA that is needed for the final maturation step of the small ribosomal subunit.</text>
</comment>
<comment type="catalytic activity">
    <reaction evidence="1">
        <text>AMP + ATP = 2 ADP</text>
        <dbReference type="Rhea" id="RHEA:12973"/>
        <dbReference type="ChEBI" id="CHEBI:30616"/>
        <dbReference type="ChEBI" id="CHEBI:456215"/>
        <dbReference type="ChEBI" id="CHEBI:456216"/>
        <dbReference type="EC" id="2.7.4.3"/>
    </reaction>
</comment>
<comment type="catalytic activity">
    <reaction evidence="1">
        <text>ATP + H2O = ADP + phosphate + H(+)</text>
        <dbReference type="Rhea" id="RHEA:13065"/>
        <dbReference type="ChEBI" id="CHEBI:15377"/>
        <dbReference type="ChEBI" id="CHEBI:15378"/>
        <dbReference type="ChEBI" id="CHEBI:30616"/>
        <dbReference type="ChEBI" id="CHEBI:43474"/>
        <dbReference type="ChEBI" id="CHEBI:456216"/>
    </reaction>
</comment>
<comment type="subunit">
    <text evidence="1">Interacts with uS11. Not a structural component of 40S pre-ribosomes, but transiently interacts with them by binding to uS11.</text>
</comment>
<comment type="similarity">
    <text evidence="1">Belongs to the adenylate kinase family. AK6 subfamily.</text>
</comment>
<keyword id="KW-0067">ATP-binding</keyword>
<keyword id="KW-0418">Kinase</keyword>
<keyword id="KW-0547">Nucleotide-binding</keyword>
<keyword id="KW-0690">Ribosome biogenesis</keyword>
<keyword id="KW-0698">rRNA processing</keyword>
<keyword id="KW-0808">Transferase</keyword>
<dbReference type="EC" id="2.7.4.3" evidence="1"/>
<dbReference type="EMBL" id="AM774415">
    <property type="protein sequence ID" value="CAP13718.1"/>
    <property type="molecule type" value="Genomic_DNA"/>
</dbReference>
<dbReference type="RefSeq" id="WP_010902737.1">
    <property type="nucleotide sequence ID" value="NC_010364.1"/>
</dbReference>
<dbReference type="SMR" id="B0R4Q3"/>
<dbReference type="EnsemblBacteria" id="CAP13718">
    <property type="protein sequence ID" value="CAP13718"/>
    <property type="gene ID" value="OE_2506R"/>
</dbReference>
<dbReference type="KEGG" id="hsl:OE_2506R"/>
<dbReference type="HOGENOM" id="CLU_079096_0_1_2"/>
<dbReference type="PhylomeDB" id="B0R4Q3"/>
<dbReference type="Proteomes" id="UP000001321">
    <property type="component" value="Chromosome"/>
</dbReference>
<dbReference type="GO" id="GO:0004017">
    <property type="term" value="F:adenylate kinase activity"/>
    <property type="evidence" value="ECO:0007669"/>
    <property type="project" value="UniProtKB-UniRule"/>
</dbReference>
<dbReference type="GO" id="GO:0005524">
    <property type="term" value="F:ATP binding"/>
    <property type="evidence" value="ECO:0007669"/>
    <property type="project" value="UniProtKB-UniRule"/>
</dbReference>
<dbReference type="GO" id="GO:0016887">
    <property type="term" value="F:ATP hydrolysis activity"/>
    <property type="evidence" value="ECO:0007669"/>
    <property type="project" value="InterPro"/>
</dbReference>
<dbReference type="GO" id="GO:0042274">
    <property type="term" value="P:ribosomal small subunit biogenesis"/>
    <property type="evidence" value="ECO:0007669"/>
    <property type="project" value="UniProtKB-UniRule"/>
</dbReference>
<dbReference type="GO" id="GO:0006364">
    <property type="term" value="P:rRNA processing"/>
    <property type="evidence" value="ECO:0007669"/>
    <property type="project" value="UniProtKB-KW"/>
</dbReference>
<dbReference type="Gene3D" id="3.40.50.300">
    <property type="entry name" value="P-loop containing nucleotide triphosphate hydrolases"/>
    <property type="match status" value="1"/>
</dbReference>
<dbReference type="HAMAP" id="MF_00039">
    <property type="entry name" value="Adenylate_kinase_AK6"/>
    <property type="match status" value="1"/>
</dbReference>
<dbReference type="InterPro" id="IPR020618">
    <property type="entry name" value="Adenyl_kinase_AK6"/>
</dbReference>
<dbReference type="InterPro" id="IPR027417">
    <property type="entry name" value="P-loop_NTPase"/>
</dbReference>
<dbReference type="PANTHER" id="PTHR12595:SF0">
    <property type="entry name" value="ADENYLATE KINASE ISOENZYME 6"/>
    <property type="match status" value="1"/>
</dbReference>
<dbReference type="PANTHER" id="PTHR12595">
    <property type="entry name" value="POS9-ACTIVATING FACTOR FAP7-RELATED"/>
    <property type="match status" value="1"/>
</dbReference>
<dbReference type="Pfam" id="PF13238">
    <property type="entry name" value="AAA_18"/>
    <property type="match status" value="1"/>
</dbReference>
<dbReference type="SUPFAM" id="SSF52540">
    <property type="entry name" value="P-loop containing nucleoside triphosphate hydrolases"/>
    <property type="match status" value="1"/>
</dbReference>
<feature type="chain" id="PRO_1000090695" description="Putative adenylate kinase">
    <location>
        <begin position="1"/>
        <end position="169"/>
    </location>
</feature>
<feature type="region of interest" description="NMP" evidence="1">
    <location>
        <begin position="28"/>
        <end position="51"/>
    </location>
</feature>
<feature type="region of interest" description="LID" evidence="1">
    <location>
        <begin position="98"/>
        <end position="108"/>
    </location>
</feature>
<feature type="binding site" evidence="1">
    <location>
        <position position="10"/>
    </location>
    <ligand>
        <name>ATP</name>
        <dbReference type="ChEBI" id="CHEBI:30616"/>
    </ligand>
</feature>
<feature type="binding site" evidence="1">
    <location>
        <position position="12"/>
    </location>
    <ligand>
        <name>ATP</name>
        <dbReference type="ChEBI" id="CHEBI:30616"/>
    </ligand>
</feature>
<feature type="binding site" evidence="1">
    <location>
        <position position="13"/>
    </location>
    <ligand>
        <name>ATP</name>
        <dbReference type="ChEBI" id="CHEBI:30616"/>
    </ligand>
</feature>
<feature type="binding site" evidence="1">
    <location>
        <position position="14"/>
    </location>
    <ligand>
        <name>ATP</name>
        <dbReference type="ChEBI" id="CHEBI:30616"/>
    </ligand>
</feature>
<feature type="binding site" evidence="1">
    <location>
        <position position="15"/>
    </location>
    <ligand>
        <name>ATP</name>
        <dbReference type="ChEBI" id="CHEBI:30616"/>
    </ligand>
</feature>
<feature type="binding site" evidence="1">
    <location>
        <position position="99"/>
    </location>
    <ligand>
        <name>ATP</name>
        <dbReference type="ChEBI" id="CHEBI:30616"/>
    </ligand>
</feature>
<organism>
    <name type="scientific">Halobacterium salinarum (strain ATCC 29341 / DSM 671 / R1)</name>
    <dbReference type="NCBI Taxonomy" id="478009"/>
    <lineage>
        <taxon>Archaea</taxon>
        <taxon>Methanobacteriati</taxon>
        <taxon>Methanobacteriota</taxon>
        <taxon>Stenosarchaea group</taxon>
        <taxon>Halobacteria</taxon>
        <taxon>Halobacteriales</taxon>
        <taxon>Halobacteriaceae</taxon>
        <taxon>Halobacterium</taxon>
        <taxon>Halobacterium salinarum NRC-34001</taxon>
    </lineage>
</organism>
<reference key="1">
    <citation type="journal article" date="2008" name="Genomics">
        <title>Evolution in the laboratory: the genome of Halobacterium salinarum strain R1 compared to that of strain NRC-1.</title>
        <authorList>
            <person name="Pfeiffer F."/>
            <person name="Schuster S.C."/>
            <person name="Broicher A."/>
            <person name="Falb M."/>
            <person name="Palm P."/>
            <person name="Rodewald K."/>
            <person name="Ruepp A."/>
            <person name="Soppa J."/>
            <person name="Tittor J."/>
            <person name="Oesterhelt D."/>
        </authorList>
    </citation>
    <scope>NUCLEOTIDE SEQUENCE [LARGE SCALE GENOMIC DNA]</scope>
    <source>
        <strain>ATCC 29341 / DSM 671 / R1</strain>
    </source>
</reference>
<name>KAD6_HALS3</name>
<accession>B0R4Q3</accession>
<evidence type="ECO:0000255" key="1">
    <source>
        <dbReference type="HAMAP-Rule" id="MF_00039"/>
    </source>
</evidence>